<organism>
    <name type="scientific">Shigella flexneri</name>
    <dbReference type="NCBI Taxonomy" id="623"/>
    <lineage>
        <taxon>Bacteria</taxon>
        <taxon>Pseudomonadati</taxon>
        <taxon>Pseudomonadota</taxon>
        <taxon>Gammaproteobacteria</taxon>
        <taxon>Enterobacterales</taxon>
        <taxon>Enterobacteriaceae</taxon>
        <taxon>Shigella</taxon>
    </lineage>
</organism>
<dbReference type="EMBL" id="AE005674">
    <property type="protein sequence ID" value="AAN44374.2"/>
    <property type="molecule type" value="Genomic_DNA"/>
</dbReference>
<dbReference type="EMBL" id="AE014073">
    <property type="protein sequence ID" value="AAP18196.1"/>
    <property type="molecule type" value="Genomic_DNA"/>
</dbReference>
<dbReference type="RefSeq" id="NP_708667.2">
    <property type="nucleotide sequence ID" value="NC_004337.2"/>
</dbReference>
<dbReference type="RefSeq" id="WP_001295377.1">
    <property type="nucleotide sequence ID" value="NZ_WPGW01000018.1"/>
</dbReference>
<dbReference type="SMR" id="P0A6U2"/>
<dbReference type="STRING" id="198214.SF2890"/>
<dbReference type="PaxDb" id="198214-SF2890"/>
<dbReference type="GeneID" id="1025851"/>
<dbReference type="GeneID" id="93779098"/>
<dbReference type="KEGG" id="sfl:SF2890"/>
<dbReference type="KEGG" id="sfx:S3089"/>
<dbReference type="PATRIC" id="fig|198214.7.peg.3439"/>
<dbReference type="HOGENOM" id="CLU_097408_2_1_6"/>
<dbReference type="Proteomes" id="UP000001006">
    <property type="component" value="Chromosome"/>
</dbReference>
<dbReference type="Proteomes" id="UP000002673">
    <property type="component" value="Chromosome"/>
</dbReference>
<dbReference type="GO" id="GO:0005829">
    <property type="term" value="C:cytosol"/>
    <property type="evidence" value="ECO:0007669"/>
    <property type="project" value="TreeGrafter"/>
</dbReference>
<dbReference type="GO" id="GO:0005960">
    <property type="term" value="C:glycine cleavage complex"/>
    <property type="evidence" value="ECO:0007669"/>
    <property type="project" value="InterPro"/>
</dbReference>
<dbReference type="GO" id="GO:0019464">
    <property type="term" value="P:glycine decarboxylation via glycine cleavage system"/>
    <property type="evidence" value="ECO:0007669"/>
    <property type="project" value="UniProtKB-UniRule"/>
</dbReference>
<dbReference type="CDD" id="cd06848">
    <property type="entry name" value="GCS_H"/>
    <property type="match status" value="1"/>
</dbReference>
<dbReference type="FunFam" id="2.40.50.100:FF:000011">
    <property type="entry name" value="Glycine cleavage system H protein"/>
    <property type="match status" value="1"/>
</dbReference>
<dbReference type="Gene3D" id="2.40.50.100">
    <property type="match status" value="1"/>
</dbReference>
<dbReference type="HAMAP" id="MF_00272">
    <property type="entry name" value="GcvH"/>
    <property type="match status" value="1"/>
</dbReference>
<dbReference type="InterPro" id="IPR003016">
    <property type="entry name" value="2-oxoA_DH_lipoyl-BS"/>
</dbReference>
<dbReference type="InterPro" id="IPR000089">
    <property type="entry name" value="Biotin_lipoyl"/>
</dbReference>
<dbReference type="InterPro" id="IPR002930">
    <property type="entry name" value="GCV_H"/>
</dbReference>
<dbReference type="InterPro" id="IPR033753">
    <property type="entry name" value="GCV_H/Fam206"/>
</dbReference>
<dbReference type="InterPro" id="IPR017453">
    <property type="entry name" value="GCV_H_sub"/>
</dbReference>
<dbReference type="InterPro" id="IPR011053">
    <property type="entry name" value="Single_hybrid_motif"/>
</dbReference>
<dbReference type="NCBIfam" id="TIGR00527">
    <property type="entry name" value="gcvH"/>
    <property type="match status" value="1"/>
</dbReference>
<dbReference type="NCBIfam" id="NF002270">
    <property type="entry name" value="PRK01202.1"/>
    <property type="match status" value="1"/>
</dbReference>
<dbReference type="PANTHER" id="PTHR11715">
    <property type="entry name" value="GLYCINE CLEAVAGE SYSTEM H PROTEIN"/>
    <property type="match status" value="1"/>
</dbReference>
<dbReference type="PANTHER" id="PTHR11715:SF3">
    <property type="entry name" value="GLYCINE CLEAVAGE SYSTEM H PROTEIN-RELATED"/>
    <property type="match status" value="1"/>
</dbReference>
<dbReference type="Pfam" id="PF01597">
    <property type="entry name" value="GCV_H"/>
    <property type="match status" value="1"/>
</dbReference>
<dbReference type="SUPFAM" id="SSF51230">
    <property type="entry name" value="Single hybrid motif"/>
    <property type="match status" value="1"/>
</dbReference>
<dbReference type="PROSITE" id="PS50968">
    <property type="entry name" value="BIOTINYL_LIPOYL"/>
    <property type="match status" value="1"/>
</dbReference>
<dbReference type="PROSITE" id="PS00189">
    <property type="entry name" value="LIPOYL"/>
    <property type="match status" value="1"/>
</dbReference>
<reference key="1">
    <citation type="journal article" date="2002" name="Nucleic Acids Res.">
        <title>Genome sequence of Shigella flexneri 2a: insights into pathogenicity through comparison with genomes of Escherichia coli K12 and O157.</title>
        <authorList>
            <person name="Jin Q."/>
            <person name="Yuan Z."/>
            <person name="Xu J."/>
            <person name="Wang Y."/>
            <person name="Shen Y."/>
            <person name="Lu W."/>
            <person name="Wang J."/>
            <person name="Liu H."/>
            <person name="Yang J."/>
            <person name="Yang F."/>
            <person name="Zhang X."/>
            <person name="Zhang J."/>
            <person name="Yang G."/>
            <person name="Wu H."/>
            <person name="Qu D."/>
            <person name="Dong J."/>
            <person name="Sun L."/>
            <person name="Xue Y."/>
            <person name="Zhao A."/>
            <person name="Gao Y."/>
            <person name="Zhu J."/>
            <person name="Kan B."/>
            <person name="Ding K."/>
            <person name="Chen S."/>
            <person name="Cheng H."/>
            <person name="Yao Z."/>
            <person name="He B."/>
            <person name="Chen R."/>
            <person name="Ma D."/>
            <person name="Qiang B."/>
            <person name="Wen Y."/>
            <person name="Hou Y."/>
            <person name="Yu J."/>
        </authorList>
    </citation>
    <scope>NUCLEOTIDE SEQUENCE [LARGE SCALE GENOMIC DNA]</scope>
    <source>
        <strain>301 / Serotype 2a</strain>
    </source>
</reference>
<reference key="2">
    <citation type="journal article" date="2003" name="Infect. Immun.">
        <title>Complete genome sequence and comparative genomics of Shigella flexneri serotype 2a strain 2457T.</title>
        <authorList>
            <person name="Wei J."/>
            <person name="Goldberg M.B."/>
            <person name="Burland V."/>
            <person name="Venkatesan M.M."/>
            <person name="Deng W."/>
            <person name="Fournier G."/>
            <person name="Mayhew G.F."/>
            <person name="Plunkett G. III"/>
            <person name="Rose D.J."/>
            <person name="Darling A."/>
            <person name="Mau B."/>
            <person name="Perna N.T."/>
            <person name="Payne S.M."/>
            <person name="Runyen-Janecky L.J."/>
            <person name="Zhou S."/>
            <person name="Schwartz D.C."/>
            <person name="Blattner F.R."/>
        </authorList>
    </citation>
    <scope>NUCLEOTIDE SEQUENCE [LARGE SCALE GENOMIC DNA]</scope>
    <source>
        <strain>ATCC 700930 / 2457T / Serotype 2a</strain>
    </source>
</reference>
<proteinExistence type="inferred from homology"/>
<accession>P0A6U2</accession>
<accession>P23884</accession>
<accession>Q8Z3W9</accession>
<protein>
    <recommendedName>
        <fullName evidence="2">Glycine cleavage system H protein</fullName>
    </recommendedName>
</protein>
<gene>
    <name evidence="2" type="primary">gcvH</name>
    <name type="ordered locus">SF2890</name>
    <name type="ordered locus">S3089</name>
</gene>
<comment type="function">
    <text evidence="2">The glycine cleavage system catalyzes the degradation of glycine. The H protein shuttles the methylamine group of glycine from the P protein to the T protein.</text>
</comment>
<comment type="cofactor">
    <cofactor evidence="2">
        <name>(R)-lipoate</name>
        <dbReference type="ChEBI" id="CHEBI:83088"/>
    </cofactor>
    <text evidence="2">Binds 1 lipoyl cofactor covalently.</text>
</comment>
<comment type="subunit">
    <text evidence="2">The glycine cleavage system is composed of four proteins: P, T, L and H.</text>
</comment>
<comment type="similarity">
    <text evidence="2">Belongs to the GcvH family.</text>
</comment>
<keyword id="KW-0450">Lipoyl</keyword>
<keyword id="KW-1185">Reference proteome</keyword>
<evidence type="ECO:0000250" key="1"/>
<evidence type="ECO:0000255" key="2">
    <source>
        <dbReference type="HAMAP-Rule" id="MF_00272"/>
    </source>
</evidence>
<evidence type="ECO:0000255" key="3">
    <source>
        <dbReference type="PROSITE-ProRule" id="PRU01066"/>
    </source>
</evidence>
<name>GCSH_SHIFL</name>
<sequence>MSNVPAELKYSKEHEWLRKEADGTYTVGITEHAQELLGDMVFVDLPEVGATVSAGDDCAVAESVKAASDIYAPVSGEIVAVNDALSDSPELVNSEPYAGGWIFKIKASDESELESLLDATAYEALLEDE</sequence>
<feature type="initiator methionine" description="Removed" evidence="1">
    <location>
        <position position="1"/>
    </location>
</feature>
<feature type="chain" id="PRO_0000166245" description="Glycine cleavage system H protein">
    <location>
        <begin position="2"/>
        <end position="129"/>
    </location>
</feature>
<feature type="domain" description="Lipoyl-binding" evidence="3">
    <location>
        <begin position="24"/>
        <end position="106"/>
    </location>
</feature>
<feature type="modified residue" description="N6-lipoyllysine" evidence="2">
    <location>
        <position position="65"/>
    </location>
</feature>